<gene>
    <name evidence="1" type="primary">atpC</name>
    <name type="ordered locus">Spro_0009</name>
</gene>
<protein>
    <recommendedName>
        <fullName evidence="1">ATP synthase epsilon chain</fullName>
    </recommendedName>
    <alternativeName>
        <fullName evidence="1">ATP synthase F1 sector epsilon subunit</fullName>
    </alternativeName>
    <alternativeName>
        <fullName evidence="1">F-ATPase epsilon subunit</fullName>
    </alternativeName>
</protein>
<comment type="function">
    <text evidence="1">Produces ATP from ADP in the presence of a proton gradient across the membrane.</text>
</comment>
<comment type="subunit">
    <text evidence="1">F-type ATPases have 2 components, CF(1) - the catalytic core - and CF(0) - the membrane proton channel. CF(1) has five subunits: alpha(3), beta(3), gamma(1), delta(1), epsilon(1). CF(0) has three main subunits: a, b and c.</text>
</comment>
<comment type="subcellular location">
    <subcellularLocation>
        <location evidence="1">Cell inner membrane</location>
        <topology evidence="1">Peripheral membrane protein</topology>
    </subcellularLocation>
</comment>
<comment type="similarity">
    <text evidence="1">Belongs to the ATPase epsilon chain family.</text>
</comment>
<proteinExistence type="inferred from homology"/>
<reference key="1">
    <citation type="submission" date="2007-09" db="EMBL/GenBank/DDBJ databases">
        <title>Complete sequence of chromosome of Serratia proteamaculans 568.</title>
        <authorList>
            <consortium name="US DOE Joint Genome Institute"/>
            <person name="Copeland A."/>
            <person name="Lucas S."/>
            <person name="Lapidus A."/>
            <person name="Barry K."/>
            <person name="Glavina del Rio T."/>
            <person name="Dalin E."/>
            <person name="Tice H."/>
            <person name="Pitluck S."/>
            <person name="Chain P."/>
            <person name="Malfatti S."/>
            <person name="Shin M."/>
            <person name="Vergez L."/>
            <person name="Schmutz J."/>
            <person name="Larimer F."/>
            <person name="Land M."/>
            <person name="Hauser L."/>
            <person name="Kyrpides N."/>
            <person name="Kim E."/>
            <person name="Taghavi S."/>
            <person name="Newman L."/>
            <person name="Vangronsveld J."/>
            <person name="van der Lelie D."/>
            <person name="Richardson P."/>
        </authorList>
    </citation>
    <scope>NUCLEOTIDE SEQUENCE [LARGE SCALE GENOMIC DNA]</scope>
    <source>
        <strain>568</strain>
    </source>
</reference>
<dbReference type="EMBL" id="CP000826">
    <property type="protein sequence ID" value="ABV39119.1"/>
    <property type="molecule type" value="Genomic_DNA"/>
</dbReference>
<dbReference type="SMR" id="A8G7M9"/>
<dbReference type="STRING" id="399741.Spro_0009"/>
<dbReference type="KEGG" id="spe:Spro_0009"/>
<dbReference type="eggNOG" id="COG0355">
    <property type="taxonomic scope" value="Bacteria"/>
</dbReference>
<dbReference type="HOGENOM" id="CLU_084338_2_0_6"/>
<dbReference type="OrthoDB" id="9791445at2"/>
<dbReference type="GO" id="GO:0005886">
    <property type="term" value="C:plasma membrane"/>
    <property type="evidence" value="ECO:0007669"/>
    <property type="project" value="UniProtKB-SubCell"/>
</dbReference>
<dbReference type="GO" id="GO:0045259">
    <property type="term" value="C:proton-transporting ATP synthase complex"/>
    <property type="evidence" value="ECO:0007669"/>
    <property type="project" value="UniProtKB-KW"/>
</dbReference>
<dbReference type="GO" id="GO:0005524">
    <property type="term" value="F:ATP binding"/>
    <property type="evidence" value="ECO:0007669"/>
    <property type="project" value="UniProtKB-UniRule"/>
</dbReference>
<dbReference type="GO" id="GO:0046933">
    <property type="term" value="F:proton-transporting ATP synthase activity, rotational mechanism"/>
    <property type="evidence" value="ECO:0007669"/>
    <property type="project" value="UniProtKB-UniRule"/>
</dbReference>
<dbReference type="CDD" id="cd12152">
    <property type="entry name" value="F1-ATPase_delta"/>
    <property type="match status" value="1"/>
</dbReference>
<dbReference type="FunFam" id="1.20.5.440:FF:000001">
    <property type="entry name" value="ATP synthase epsilon chain"/>
    <property type="match status" value="1"/>
</dbReference>
<dbReference type="FunFam" id="2.60.15.10:FF:000001">
    <property type="entry name" value="ATP synthase epsilon chain"/>
    <property type="match status" value="1"/>
</dbReference>
<dbReference type="Gene3D" id="1.20.5.440">
    <property type="entry name" value="ATP synthase delta/epsilon subunit, C-terminal domain"/>
    <property type="match status" value="1"/>
</dbReference>
<dbReference type="Gene3D" id="2.60.15.10">
    <property type="entry name" value="F0F1 ATP synthase delta/epsilon subunit, N-terminal"/>
    <property type="match status" value="1"/>
</dbReference>
<dbReference type="HAMAP" id="MF_00530">
    <property type="entry name" value="ATP_synth_epsil_bac"/>
    <property type="match status" value="1"/>
</dbReference>
<dbReference type="InterPro" id="IPR036794">
    <property type="entry name" value="ATP_F1_dsu/esu_C_sf"/>
</dbReference>
<dbReference type="InterPro" id="IPR001469">
    <property type="entry name" value="ATP_synth_F1_dsu/esu"/>
</dbReference>
<dbReference type="InterPro" id="IPR020546">
    <property type="entry name" value="ATP_synth_F1_dsu/esu_N"/>
</dbReference>
<dbReference type="InterPro" id="IPR020547">
    <property type="entry name" value="ATP_synth_F1_esu_C"/>
</dbReference>
<dbReference type="InterPro" id="IPR036771">
    <property type="entry name" value="ATPsynth_dsu/esu_N"/>
</dbReference>
<dbReference type="NCBIfam" id="TIGR01216">
    <property type="entry name" value="ATP_synt_epsi"/>
    <property type="match status" value="1"/>
</dbReference>
<dbReference type="NCBIfam" id="NF001847">
    <property type="entry name" value="PRK00571.1-4"/>
    <property type="match status" value="1"/>
</dbReference>
<dbReference type="PANTHER" id="PTHR13822">
    <property type="entry name" value="ATP SYNTHASE DELTA/EPSILON CHAIN"/>
    <property type="match status" value="1"/>
</dbReference>
<dbReference type="PANTHER" id="PTHR13822:SF10">
    <property type="entry name" value="ATP SYNTHASE EPSILON CHAIN, CHLOROPLASTIC"/>
    <property type="match status" value="1"/>
</dbReference>
<dbReference type="Pfam" id="PF00401">
    <property type="entry name" value="ATP-synt_DE"/>
    <property type="match status" value="1"/>
</dbReference>
<dbReference type="Pfam" id="PF02823">
    <property type="entry name" value="ATP-synt_DE_N"/>
    <property type="match status" value="1"/>
</dbReference>
<dbReference type="SUPFAM" id="SSF46604">
    <property type="entry name" value="Epsilon subunit of F1F0-ATP synthase C-terminal domain"/>
    <property type="match status" value="1"/>
</dbReference>
<dbReference type="SUPFAM" id="SSF51344">
    <property type="entry name" value="Epsilon subunit of F1F0-ATP synthase N-terminal domain"/>
    <property type="match status" value="1"/>
</dbReference>
<evidence type="ECO:0000255" key="1">
    <source>
        <dbReference type="HAMAP-Rule" id="MF_00530"/>
    </source>
</evidence>
<feature type="chain" id="PRO_1000211792" description="ATP synthase epsilon chain">
    <location>
        <begin position="1"/>
        <end position="139"/>
    </location>
</feature>
<organism>
    <name type="scientific">Serratia proteamaculans (strain 568)</name>
    <dbReference type="NCBI Taxonomy" id="399741"/>
    <lineage>
        <taxon>Bacteria</taxon>
        <taxon>Pseudomonadati</taxon>
        <taxon>Pseudomonadota</taxon>
        <taxon>Gammaproteobacteria</taxon>
        <taxon>Enterobacterales</taxon>
        <taxon>Yersiniaceae</taxon>
        <taxon>Serratia</taxon>
    </lineage>
</organism>
<keyword id="KW-0066">ATP synthesis</keyword>
<keyword id="KW-0997">Cell inner membrane</keyword>
<keyword id="KW-1003">Cell membrane</keyword>
<keyword id="KW-0139">CF(1)</keyword>
<keyword id="KW-0375">Hydrogen ion transport</keyword>
<keyword id="KW-0406">Ion transport</keyword>
<keyword id="KW-0472">Membrane</keyword>
<keyword id="KW-0813">Transport</keyword>
<accession>A8G7M9</accession>
<name>ATPE_SERP5</name>
<sequence>MAMTYHLDVVSAEKHMFSGLVQKIQVTGSEGELGIFPGHAPLLTAIKPGMVRIVKQHGEEEFIYLSGGILEVQPSVVTVLADTAIRGTDLDEARALEAKRKAEEHISSSHGDVDYAQASAELAKAIAKLRVIELTRRSM</sequence>